<protein>
    <recommendedName>
        <fullName>Nuclear hormone receptor family member nhr-16</fullName>
    </recommendedName>
</protein>
<comment type="function">
    <text>Orphan nuclear receptor.</text>
</comment>
<comment type="subcellular location">
    <subcellularLocation>
        <location evidence="1">Nucleus</location>
    </subcellularLocation>
</comment>
<comment type="similarity">
    <text evidence="3">Belongs to the nuclear hormone receptor family.</text>
</comment>
<dbReference type="EMBL" id="AF083231">
    <property type="protein sequence ID" value="AAD03689.1"/>
    <property type="molecule type" value="mRNA"/>
</dbReference>
<dbReference type="EMBL" id="FO081729">
    <property type="protein sequence ID" value="CCD73612.1"/>
    <property type="molecule type" value="Genomic_DNA"/>
</dbReference>
<dbReference type="PIR" id="T43355">
    <property type="entry name" value="T43355"/>
</dbReference>
<dbReference type="RefSeq" id="NP_494785.1">
    <property type="nucleotide sequence ID" value="NM_062384.7"/>
</dbReference>
<dbReference type="SMR" id="Q27521"/>
<dbReference type="FunCoup" id="Q27521">
    <property type="interactions" value="172"/>
</dbReference>
<dbReference type="STRING" id="6239.T12C9.6.1"/>
<dbReference type="PaxDb" id="6239-T12C9.6"/>
<dbReference type="EnsemblMetazoa" id="T12C9.6.1">
    <property type="protein sequence ID" value="T12C9.6.1"/>
    <property type="gene ID" value="WBGene00003615"/>
</dbReference>
<dbReference type="GeneID" id="173781"/>
<dbReference type="KEGG" id="cel:CELE_T12C9.6"/>
<dbReference type="UCSC" id="T12C9.6">
    <property type="organism name" value="c. elegans"/>
</dbReference>
<dbReference type="AGR" id="WB:WBGene00003615"/>
<dbReference type="CTD" id="173781"/>
<dbReference type="WormBase" id="T12C9.6">
    <property type="protein sequence ID" value="CE28079"/>
    <property type="gene ID" value="WBGene00003615"/>
    <property type="gene designation" value="nhr-16"/>
</dbReference>
<dbReference type="eggNOG" id="KOG3575">
    <property type="taxonomic scope" value="Eukaryota"/>
</dbReference>
<dbReference type="GeneTree" id="ENSGT00940000168778"/>
<dbReference type="HOGENOM" id="CLU_007368_1_1_1"/>
<dbReference type="InParanoid" id="Q27521"/>
<dbReference type="OMA" id="ADICCKS"/>
<dbReference type="OrthoDB" id="5830034at2759"/>
<dbReference type="PhylomeDB" id="Q27521"/>
<dbReference type="PRO" id="PR:Q27521"/>
<dbReference type="Proteomes" id="UP000001940">
    <property type="component" value="Chromosome II"/>
</dbReference>
<dbReference type="Bgee" id="WBGene00003615">
    <property type="expression patterns" value="Expressed in material anatomical entity and 3 other cell types or tissues"/>
</dbReference>
<dbReference type="GO" id="GO:0005634">
    <property type="term" value="C:nucleus"/>
    <property type="evidence" value="ECO:0000318"/>
    <property type="project" value="GO_Central"/>
</dbReference>
<dbReference type="GO" id="GO:0003700">
    <property type="term" value="F:DNA-binding transcription factor activity"/>
    <property type="evidence" value="ECO:0000318"/>
    <property type="project" value="GO_Central"/>
</dbReference>
<dbReference type="GO" id="GO:0000978">
    <property type="term" value="F:RNA polymerase II cis-regulatory region sequence-specific DNA binding"/>
    <property type="evidence" value="ECO:0007669"/>
    <property type="project" value="InterPro"/>
</dbReference>
<dbReference type="GO" id="GO:0008270">
    <property type="term" value="F:zinc ion binding"/>
    <property type="evidence" value="ECO:0007669"/>
    <property type="project" value="UniProtKB-KW"/>
</dbReference>
<dbReference type="GO" id="GO:0006357">
    <property type="term" value="P:regulation of transcription by RNA polymerase II"/>
    <property type="evidence" value="ECO:0000318"/>
    <property type="project" value="GO_Central"/>
</dbReference>
<dbReference type="CDD" id="cd06960">
    <property type="entry name" value="NR_DBD_HNF4A"/>
    <property type="match status" value="1"/>
</dbReference>
<dbReference type="Gene3D" id="3.30.50.10">
    <property type="entry name" value="Erythroid Transcription Factor GATA-1, subunit A"/>
    <property type="match status" value="1"/>
</dbReference>
<dbReference type="Gene3D" id="1.10.565.10">
    <property type="entry name" value="Retinoid X Receptor"/>
    <property type="match status" value="1"/>
</dbReference>
<dbReference type="InterPro" id="IPR049636">
    <property type="entry name" value="HNF4-like_DBD"/>
</dbReference>
<dbReference type="InterPro" id="IPR035500">
    <property type="entry name" value="NHR-like_dom_sf"/>
</dbReference>
<dbReference type="InterPro" id="IPR000536">
    <property type="entry name" value="Nucl_hrmn_rcpt_lig-bd"/>
</dbReference>
<dbReference type="InterPro" id="IPR001628">
    <property type="entry name" value="Znf_hrmn_rcpt"/>
</dbReference>
<dbReference type="InterPro" id="IPR013088">
    <property type="entry name" value="Znf_NHR/GATA"/>
</dbReference>
<dbReference type="PANTHER" id="PTHR46011:SF18">
    <property type="entry name" value="NR LBD DOMAIN-CONTAINING PROTEIN-RELATED"/>
    <property type="match status" value="1"/>
</dbReference>
<dbReference type="PANTHER" id="PTHR46011">
    <property type="entry name" value="NUCLEAR HORMONE RECEPTOR FAMILY MEMBER NHR-86-RELATED"/>
    <property type="match status" value="1"/>
</dbReference>
<dbReference type="Pfam" id="PF00104">
    <property type="entry name" value="Hormone_recep"/>
    <property type="match status" value="1"/>
</dbReference>
<dbReference type="Pfam" id="PF00105">
    <property type="entry name" value="zf-C4"/>
    <property type="match status" value="1"/>
</dbReference>
<dbReference type="PRINTS" id="PR00047">
    <property type="entry name" value="STROIDFINGER"/>
</dbReference>
<dbReference type="SMART" id="SM00430">
    <property type="entry name" value="HOLI"/>
    <property type="match status" value="1"/>
</dbReference>
<dbReference type="SMART" id="SM00399">
    <property type="entry name" value="ZnF_C4"/>
    <property type="match status" value="1"/>
</dbReference>
<dbReference type="SUPFAM" id="SSF57716">
    <property type="entry name" value="Glucocorticoid receptor-like (DNA-binding domain)"/>
    <property type="match status" value="1"/>
</dbReference>
<dbReference type="SUPFAM" id="SSF48508">
    <property type="entry name" value="Nuclear receptor ligand-binding domain"/>
    <property type="match status" value="1"/>
</dbReference>
<dbReference type="PROSITE" id="PS51843">
    <property type="entry name" value="NR_LBD"/>
    <property type="match status" value="1"/>
</dbReference>
<dbReference type="PROSITE" id="PS00031">
    <property type="entry name" value="NUCLEAR_REC_DBD_1"/>
    <property type="match status" value="1"/>
</dbReference>
<dbReference type="PROSITE" id="PS51030">
    <property type="entry name" value="NUCLEAR_REC_DBD_2"/>
    <property type="match status" value="1"/>
</dbReference>
<reference key="1">
    <citation type="journal article" date="1999" name="Genome Res.">
        <title>The nuclear receptor superfamily has undergone extensive proliferation and diversification in nematodes.</title>
        <authorList>
            <person name="Sluder A.E."/>
            <person name="Mathews S.W."/>
            <person name="Hough D."/>
            <person name="Yin V.P."/>
            <person name="Maina C.V."/>
        </authorList>
    </citation>
    <scope>NUCLEOTIDE SEQUENCE [MRNA]</scope>
    <source>
        <strain>Bristol N2</strain>
    </source>
</reference>
<reference key="2">
    <citation type="journal article" date="1998" name="Science">
        <title>Genome sequence of the nematode C. elegans: a platform for investigating biology.</title>
        <authorList>
            <consortium name="The C. elegans sequencing consortium"/>
        </authorList>
    </citation>
    <scope>NUCLEOTIDE SEQUENCE [LARGE SCALE GENOMIC DNA]</scope>
    <source>
        <strain>Bristol N2</strain>
    </source>
</reference>
<organism>
    <name type="scientific">Caenorhabditis elegans</name>
    <dbReference type="NCBI Taxonomy" id="6239"/>
    <lineage>
        <taxon>Eukaryota</taxon>
        <taxon>Metazoa</taxon>
        <taxon>Ecdysozoa</taxon>
        <taxon>Nematoda</taxon>
        <taxon>Chromadorea</taxon>
        <taxon>Rhabditida</taxon>
        <taxon>Rhabditina</taxon>
        <taxon>Rhabditomorpha</taxon>
        <taxon>Rhabditoidea</taxon>
        <taxon>Rhabditidae</taxon>
        <taxon>Peloderinae</taxon>
        <taxon>Caenorhabditis</taxon>
    </lineage>
</organism>
<keyword id="KW-0238">DNA-binding</keyword>
<keyword id="KW-0479">Metal-binding</keyword>
<keyword id="KW-0539">Nucleus</keyword>
<keyword id="KW-0675">Receptor</keyword>
<keyword id="KW-1185">Reference proteome</keyword>
<keyword id="KW-0804">Transcription</keyword>
<keyword id="KW-0805">Transcription regulation</keyword>
<keyword id="KW-0862">Zinc</keyword>
<keyword id="KW-0863">Zinc-finger</keyword>
<proteinExistence type="evidence at transcript level"/>
<feature type="chain" id="PRO_0000053768" description="Nuclear hormone receptor family member nhr-16">
    <location>
        <begin position="1"/>
        <end position="388"/>
    </location>
</feature>
<feature type="domain" description="NR LBD" evidence="2">
    <location>
        <begin position="115"/>
        <end position="387"/>
    </location>
</feature>
<feature type="DNA-binding region" description="Nuclear receptor" evidence="1">
    <location>
        <begin position="11"/>
        <end position="86"/>
    </location>
</feature>
<feature type="zinc finger region" description="NR C4-type" evidence="1">
    <location>
        <begin position="14"/>
        <end position="34"/>
    </location>
</feature>
<feature type="zinc finger region" description="NR C4-type" evidence="1">
    <location>
        <begin position="50"/>
        <end position="74"/>
    </location>
</feature>
<evidence type="ECO:0000255" key="1">
    <source>
        <dbReference type="PROSITE-ProRule" id="PRU00407"/>
    </source>
</evidence>
<evidence type="ECO:0000255" key="2">
    <source>
        <dbReference type="PROSITE-ProRule" id="PRU01189"/>
    </source>
</evidence>
<evidence type="ECO:0000305" key="3"/>
<accession>Q27521</accession>
<accession>Q9XYB9</accession>
<gene>
    <name type="primary">nhr-16</name>
    <name type="ORF">T12C9.6</name>
</gene>
<name>NHR16_CAEEL</name>
<sequence length="388" mass="44462">MGGPRFKDKVFLKCAICQESAEGFHFGAEACRACAAFFRRTVSNRKTYSCQGNNDCDVTINIRCMCRACRYIKCIEVGMNPAGVQQRLPPSKTLVEVSMDLPTVSNPSILSFPSPPSSLMLHIPSSYSNQMPILDKMRKSYETLCNARKTLHRKDGANIFQDNVPKPVTYKKAIDQGMKDVKLTSDWVSWCFEDFKNLSIDQKKILFHNAYTPYFMMEGGFLSHIRNTPEHLVMPSGDYIDTLDLNSFYNCSESDRQISSKEIDRLFKPSNDRFIKSVTLPMMSLQLDIFEFFVLFTLLLWDTGLIEISEECIEIGTKVKTQVLKELDFYMRNVKKVEEPLVRTANIVNLLPAVQKGVRRIQDDLEVTKVFDLYTASDEFYNLMSGRF</sequence>